<feature type="chain" id="PRO_0000101103" description="Threonine--tRNA ligase">
    <location>
        <begin position="1"/>
        <end position="634"/>
    </location>
</feature>
<feature type="region of interest" description="Editing domain" evidence="1 3">
    <location>
        <begin position="1"/>
        <end position="142"/>
    </location>
</feature>
<feature type="region of interest" description="Catalytic" evidence="1">
    <location>
        <begin position="214"/>
        <end position="513"/>
    </location>
</feature>
<feature type="binding site" evidence="1">
    <location>
        <position position="306"/>
    </location>
    <ligand>
        <name>Zn(2+)</name>
        <dbReference type="ChEBI" id="CHEBI:29105"/>
    </ligand>
</feature>
<feature type="binding site" evidence="1">
    <location>
        <position position="358"/>
    </location>
    <ligand>
        <name>Zn(2+)</name>
        <dbReference type="ChEBI" id="CHEBI:29105"/>
    </ligand>
</feature>
<feature type="binding site" evidence="1">
    <location>
        <position position="482"/>
    </location>
    <ligand>
        <name>Zn(2+)</name>
        <dbReference type="ChEBI" id="CHEBI:29105"/>
    </ligand>
</feature>
<feature type="mutagenesis site" description="Aminoacylates with L-threonine, still misactivates L-serine, no longer edits mischarged L-seryl-tRNA(Thr)." evidence="2">
    <original>CKGHPLSELSR</original>
    <variation>AAASAAASAAA</variation>
    <location>
        <begin position="125"/>
        <end position="135"/>
    </location>
</feature>
<evidence type="ECO:0000255" key="1">
    <source>
        <dbReference type="HAMAP-Rule" id="MF_00184"/>
    </source>
</evidence>
<evidence type="ECO:0000269" key="2">
    <source>
    </source>
</evidence>
<evidence type="ECO:0000305" key="3">
    <source>
    </source>
</evidence>
<sequence length="634" mass="72765">MQLLLIHSDYIEYETKKQTPVAEKIEESLKSGRLEEALTAFTAVESVDEANPEEAIKKAVSEIEKVAAQVKTNRIMLYPYAHLSSDLSSPKVAVQVLKGMEAALSSRYEVKRAPFGWYKAFTVSCKGHPLSELSRSIRPEGAAKAEVKTETCEKEEVVSEALKAEGTARSYWRILTPDGELHEVEGFDLTPYPKLQQFVNYEISKSRAVERAPPHVELMRRLELADYEPGSDSGNMRYYPKGRLVKSLLENYVLDVATEFGAMEVETPLMYDMNHPTLKKYLDRFPARQYSIESDKRHMFLRFAACFGQFLMNHDMTISYKNLPLRMIEMTRYSFRKEQRGELVGLRRLRAFTMPDMHTLCEDMDQAVNQFKEQYDLCISVLENVGIHINDYEVAIRFTRDFYEANKDLVVNMAKTVNKPVLVEMWDTRFFYFVLKFEFNFVDALAKASALSTVQIDVENAERYDISYVNADGKLERPTVLHCSPSGAIERCIYALLEKAAMETEEGKVPMLPVWLSPTQVRIVPISEKHIAFAEEVAKKLDFRVDVDDRDLSIGKKVREAGREWVPYVVVIGDKEMEESTINVTIREESGQDKPKKVQMTPEELNARIKEETSGKPYRKLPLAKYLSARPKFL</sequence>
<organism>
    <name type="scientific">Methanosarcina mazei (strain ATCC BAA-159 / DSM 3647 / Goe1 / Go1 / JCM 11833 / OCM 88)</name>
    <name type="common">Methanosarcina frisia</name>
    <dbReference type="NCBI Taxonomy" id="192952"/>
    <lineage>
        <taxon>Archaea</taxon>
        <taxon>Methanobacteriati</taxon>
        <taxon>Methanobacteriota</taxon>
        <taxon>Stenosarchaea group</taxon>
        <taxon>Methanomicrobia</taxon>
        <taxon>Methanosarcinales</taxon>
        <taxon>Methanosarcinaceae</taxon>
        <taxon>Methanosarcina</taxon>
    </lineage>
</organism>
<keyword id="KW-0030">Aminoacyl-tRNA synthetase</keyword>
<keyword id="KW-0067">ATP-binding</keyword>
<keyword id="KW-0963">Cytoplasm</keyword>
<keyword id="KW-0436">Ligase</keyword>
<keyword id="KW-0479">Metal-binding</keyword>
<keyword id="KW-0547">Nucleotide-binding</keyword>
<keyword id="KW-0648">Protein biosynthesis</keyword>
<keyword id="KW-0694">RNA-binding</keyword>
<keyword id="KW-0820">tRNA-binding</keyword>
<keyword id="KW-0862">Zinc</keyword>
<name>SYT_METMA</name>
<protein>
    <recommendedName>
        <fullName evidence="1">Threonine--tRNA ligase</fullName>
        <ecNumber evidence="1">6.1.1.3</ecNumber>
    </recommendedName>
    <alternativeName>
        <fullName evidence="1">Threonyl-tRNA synthetase</fullName>
        <shortName evidence="1">ThrRS</shortName>
    </alternativeName>
</protein>
<comment type="function">
    <text evidence="2">Catalyzes the attachment of threonine to tRNA(Thr) in a two-step reaction: L-threonine is first activated by ATP to form Thr-AMP and then transferred to the acceptor end of tRNA(Thr) (Probable). Edits incorrectly charged L-seryl-tRNA(Thr) probably via its editing domain (tested with total bovine tRNA) (PubMed:15079065). Activates L-serine, but does not detectably transfer it to tRNA (tested with total bovine tRNA) (PubMed:15079065).</text>
</comment>
<comment type="catalytic activity">
    <reaction evidence="1">
        <text>tRNA(Thr) + L-threonine + ATP = L-threonyl-tRNA(Thr) + AMP + diphosphate + H(+)</text>
        <dbReference type="Rhea" id="RHEA:24624"/>
        <dbReference type="Rhea" id="RHEA-COMP:9670"/>
        <dbReference type="Rhea" id="RHEA-COMP:9704"/>
        <dbReference type="ChEBI" id="CHEBI:15378"/>
        <dbReference type="ChEBI" id="CHEBI:30616"/>
        <dbReference type="ChEBI" id="CHEBI:33019"/>
        <dbReference type="ChEBI" id="CHEBI:57926"/>
        <dbReference type="ChEBI" id="CHEBI:78442"/>
        <dbReference type="ChEBI" id="CHEBI:78534"/>
        <dbReference type="ChEBI" id="CHEBI:456215"/>
        <dbReference type="EC" id="6.1.1.3"/>
    </reaction>
</comment>
<comment type="cofactor">
    <cofactor evidence="1">
        <name>Zn(2+)</name>
        <dbReference type="ChEBI" id="CHEBI:29105"/>
    </cofactor>
    <text evidence="1">Binds 1 zinc ion per subunit.</text>
</comment>
<comment type="subunit">
    <text evidence="1">Homodimer.</text>
</comment>
<comment type="subcellular location">
    <subcellularLocation>
        <location evidence="1">Cytoplasm</location>
    </subcellularLocation>
</comment>
<comment type="domain">
    <text evidence="1 3">The N-terminal domain (approximately residues 1-142) is an archaea-specific tRNA-editing domain that hydrolyzes incorrectly charged L-seryl-tRNA(Thr) (PubMed:15079065). Catalysis of tRNA editing is performed by the charged tRNA itself.</text>
</comment>
<comment type="similarity">
    <text evidence="1">Belongs to the class-II aminoacyl-tRNA synthetase family.</text>
</comment>
<dbReference type="EC" id="6.1.1.3" evidence="1"/>
<dbReference type="EMBL" id="AE008384">
    <property type="protein sequence ID" value="AAM33000.1"/>
    <property type="molecule type" value="Genomic_DNA"/>
</dbReference>
<dbReference type="RefSeq" id="WP_011035193.1">
    <property type="nucleotide sequence ID" value="NC_003901.1"/>
</dbReference>
<dbReference type="SMR" id="Q8PRY4"/>
<dbReference type="KEGG" id="mma:MM_3304"/>
<dbReference type="PATRIC" id="fig|192952.21.peg.3838"/>
<dbReference type="eggNOG" id="arCOG00401">
    <property type="taxonomic scope" value="Archaea"/>
</dbReference>
<dbReference type="HOGENOM" id="CLU_029833_0_0_2"/>
<dbReference type="Proteomes" id="UP000000595">
    <property type="component" value="Chromosome"/>
</dbReference>
<dbReference type="GO" id="GO:0005737">
    <property type="term" value="C:cytoplasm"/>
    <property type="evidence" value="ECO:0007669"/>
    <property type="project" value="UniProtKB-SubCell"/>
</dbReference>
<dbReference type="GO" id="GO:0002161">
    <property type="term" value="F:aminoacyl-tRNA deacylase activity"/>
    <property type="evidence" value="ECO:0000314"/>
    <property type="project" value="UniProtKB"/>
</dbReference>
<dbReference type="GO" id="GO:0005524">
    <property type="term" value="F:ATP binding"/>
    <property type="evidence" value="ECO:0007669"/>
    <property type="project" value="UniProtKB-UniRule"/>
</dbReference>
<dbReference type="GO" id="GO:0004829">
    <property type="term" value="F:threonine-tRNA ligase activity"/>
    <property type="evidence" value="ECO:0000314"/>
    <property type="project" value="UniProtKB"/>
</dbReference>
<dbReference type="GO" id="GO:0000049">
    <property type="term" value="F:tRNA binding"/>
    <property type="evidence" value="ECO:0007669"/>
    <property type="project" value="UniProtKB-KW"/>
</dbReference>
<dbReference type="GO" id="GO:0008270">
    <property type="term" value="F:zinc ion binding"/>
    <property type="evidence" value="ECO:0007669"/>
    <property type="project" value="InterPro"/>
</dbReference>
<dbReference type="GO" id="GO:0006435">
    <property type="term" value="P:threonyl-tRNA aminoacylation"/>
    <property type="evidence" value="ECO:0000314"/>
    <property type="project" value="UniProtKB"/>
</dbReference>
<dbReference type="FunFam" id="3.30.930.10:FF:000076">
    <property type="entry name" value="Threonine--tRNA ligase"/>
    <property type="match status" value="1"/>
</dbReference>
<dbReference type="FunFam" id="3.40.50.800:FF:000001">
    <property type="entry name" value="Threonine--tRNA ligase"/>
    <property type="match status" value="1"/>
</dbReference>
<dbReference type="FunFam" id="3.50.80.10:FF:000004">
    <property type="entry name" value="Threonine--tRNA ligase"/>
    <property type="match status" value="1"/>
</dbReference>
<dbReference type="Gene3D" id="3.40.50.800">
    <property type="entry name" value="Anticodon-binding domain"/>
    <property type="match status" value="1"/>
</dbReference>
<dbReference type="Gene3D" id="3.30.930.10">
    <property type="entry name" value="Bira Bifunctional Protein, Domain 2"/>
    <property type="match status" value="1"/>
</dbReference>
<dbReference type="Gene3D" id="3.50.80.10">
    <property type="entry name" value="D-tyrosyl-tRNA(Tyr) deacylase"/>
    <property type="match status" value="1"/>
</dbReference>
<dbReference type="HAMAP" id="MF_00184">
    <property type="entry name" value="Thr_tRNA_synth"/>
    <property type="match status" value="1"/>
</dbReference>
<dbReference type="InterPro" id="IPR002314">
    <property type="entry name" value="aa-tRNA-synt_IIb"/>
</dbReference>
<dbReference type="InterPro" id="IPR006195">
    <property type="entry name" value="aa-tRNA-synth_II"/>
</dbReference>
<dbReference type="InterPro" id="IPR045864">
    <property type="entry name" value="aa-tRNA-synth_II/BPL/LPL"/>
</dbReference>
<dbReference type="InterPro" id="IPR004154">
    <property type="entry name" value="Anticodon-bd"/>
</dbReference>
<dbReference type="InterPro" id="IPR036621">
    <property type="entry name" value="Anticodon-bd_dom_sf"/>
</dbReference>
<dbReference type="InterPro" id="IPR023509">
    <property type="entry name" value="DTD-like_sf"/>
</dbReference>
<dbReference type="InterPro" id="IPR002320">
    <property type="entry name" value="Thr-tRNA-ligase_IIa"/>
</dbReference>
<dbReference type="InterPro" id="IPR015011">
    <property type="entry name" value="Threonyl-tRNA_syn_edit_dom_arc"/>
</dbReference>
<dbReference type="NCBIfam" id="NF003068">
    <property type="entry name" value="PRK03991.1"/>
    <property type="match status" value="1"/>
</dbReference>
<dbReference type="NCBIfam" id="TIGR00418">
    <property type="entry name" value="thrS"/>
    <property type="match status" value="1"/>
</dbReference>
<dbReference type="PANTHER" id="PTHR11451:SF44">
    <property type="entry name" value="THREONINE--TRNA LIGASE, CHLOROPLASTIC_MITOCHONDRIAL 2"/>
    <property type="match status" value="1"/>
</dbReference>
<dbReference type="PANTHER" id="PTHR11451">
    <property type="entry name" value="THREONINE-TRNA LIGASE"/>
    <property type="match status" value="1"/>
</dbReference>
<dbReference type="Pfam" id="PF03129">
    <property type="entry name" value="HGTP_anticodon"/>
    <property type="match status" value="1"/>
</dbReference>
<dbReference type="Pfam" id="PF00587">
    <property type="entry name" value="tRNA-synt_2b"/>
    <property type="match status" value="1"/>
</dbReference>
<dbReference type="Pfam" id="PF08915">
    <property type="entry name" value="tRNA-Thr_ED"/>
    <property type="match status" value="1"/>
</dbReference>
<dbReference type="PRINTS" id="PR01047">
    <property type="entry name" value="TRNASYNTHTHR"/>
</dbReference>
<dbReference type="SUPFAM" id="SSF52954">
    <property type="entry name" value="Class II aaRS ABD-related"/>
    <property type="match status" value="1"/>
</dbReference>
<dbReference type="SUPFAM" id="SSF55681">
    <property type="entry name" value="Class II aaRS and biotin synthetases"/>
    <property type="match status" value="1"/>
</dbReference>
<dbReference type="PROSITE" id="PS50862">
    <property type="entry name" value="AA_TRNA_LIGASE_II"/>
    <property type="match status" value="1"/>
</dbReference>
<accession>Q8PRY4</accession>
<gene>
    <name evidence="1" type="primary">thrS</name>
    <name type="ordered locus">MM_3304</name>
</gene>
<proteinExistence type="evidence at protein level"/>
<reference key="1">
    <citation type="journal article" date="2002" name="J. Mol. Microbiol. Biotechnol.">
        <title>The genome of Methanosarcina mazei: evidence for lateral gene transfer between Bacteria and Archaea.</title>
        <authorList>
            <person name="Deppenmeier U."/>
            <person name="Johann A."/>
            <person name="Hartsch T."/>
            <person name="Merkl R."/>
            <person name="Schmitz R.A."/>
            <person name="Martinez-Arias R."/>
            <person name="Henne A."/>
            <person name="Wiezer A."/>
            <person name="Baeumer S."/>
            <person name="Jacobi C."/>
            <person name="Brueggemann H."/>
            <person name="Lienard T."/>
            <person name="Christmann A."/>
            <person name="Boemecke M."/>
            <person name="Steckel S."/>
            <person name="Bhattacharyya A."/>
            <person name="Lykidis A."/>
            <person name="Overbeek R."/>
            <person name="Klenk H.-P."/>
            <person name="Gunsalus R.P."/>
            <person name="Fritz H.-J."/>
            <person name="Gottschalk G."/>
        </authorList>
    </citation>
    <scope>NUCLEOTIDE SEQUENCE [LARGE SCALE GENOMIC DNA]</scope>
    <source>
        <strain>ATCC BAA-159 / DSM 3647 / Goe1 / Go1 / JCM 11833 / OCM 88</strain>
    </source>
</reference>
<reference key="2">
    <citation type="journal article" date="2004" name="Proc. Natl. Acad. Sci. U.S.A.">
        <title>A domain for editing by an archaebacterial tRNA synthetase.</title>
        <authorList>
            <person name="Beebe K."/>
            <person name="Merriman E."/>
            <person name="Ribas De Pouplana L."/>
            <person name="Schimmel P."/>
        </authorList>
    </citation>
    <scope>FUNCTION IN AMINOACYLATION AND EDITING</scope>
    <scope>DOMAIN</scope>
    <scope>MUTAGENESIS OF 125-CYS--ARG-135</scope>
</reference>